<reference key="1">
    <citation type="journal article" date="2002" name="Biochem. Biophys. Res. Commun.">
        <title>Cloning and expression of a full-length cDNA encoding human inositol 1,4,5-trisphosphate 3-kinase B.</title>
        <authorList>
            <person name="Dewaste V."/>
            <person name="Roymans D."/>
            <person name="Moreau C."/>
            <person name="Erneux C."/>
        </authorList>
    </citation>
    <scope>NUCLEOTIDE SEQUENCE [MRNA] (ISOFORM 1)</scope>
    <scope>VARIANTS ALA-408 AND GLN-552</scope>
    <scope>CATALYTIC ACTIVITY</scope>
    <scope>FUNCTION</scope>
    <scope>ACTIVITY REGULATION</scope>
    <source>
        <tissue>Hippocampus</tissue>
    </source>
</reference>
<reference key="2">
    <citation type="submission" date="1999-05" db="EMBL/GenBank/DDBJ databases">
        <title>Cloning of the complete protein coding regions for inositol 1,4,5-trisphosphate 3-kinase B-isoforms from rat and human.</title>
        <authorList>
            <person name="Bertsch U."/>
            <person name="Suesse S."/>
            <person name="Frerk S."/>
            <person name="Fanick W."/>
        </authorList>
    </citation>
    <scope>NUCLEOTIDE SEQUENCE [MRNA] (ISOFORM 1)</scope>
    <scope>VARIANT GLN-552</scope>
    <source>
        <tissue>Colon</tissue>
    </source>
</reference>
<reference key="3">
    <citation type="journal article" date="2006" name="Nature">
        <title>The DNA sequence and biological annotation of human chromosome 1.</title>
        <authorList>
            <person name="Gregory S.G."/>
            <person name="Barlow K.F."/>
            <person name="McLay K.E."/>
            <person name="Kaul R."/>
            <person name="Swarbreck D."/>
            <person name="Dunham A."/>
            <person name="Scott C.E."/>
            <person name="Howe K.L."/>
            <person name="Woodfine K."/>
            <person name="Spencer C.C.A."/>
            <person name="Jones M.C."/>
            <person name="Gillson C."/>
            <person name="Searle S."/>
            <person name="Zhou Y."/>
            <person name="Kokocinski F."/>
            <person name="McDonald L."/>
            <person name="Evans R."/>
            <person name="Phillips K."/>
            <person name="Atkinson A."/>
            <person name="Cooper R."/>
            <person name="Jones C."/>
            <person name="Hall R.E."/>
            <person name="Andrews T.D."/>
            <person name="Lloyd C."/>
            <person name="Ainscough R."/>
            <person name="Almeida J.P."/>
            <person name="Ambrose K.D."/>
            <person name="Anderson F."/>
            <person name="Andrew R.W."/>
            <person name="Ashwell R.I.S."/>
            <person name="Aubin K."/>
            <person name="Babbage A.K."/>
            <person name="Bagguley C.L."/>
            <person name="Bailey J."/>
            <person name="Beasley H."/>
            <person name="Bethel G."/>
            <person name="Bird C.P."/>
            <person name="Bray-Allen S."/>
            <person name="Brown J.Y."/>
            <person name="Brown A.J."/>
            <person name="Buckley D."/>
            <person name="Burton J."/>
            <person name="Bye J."/>
            <person name="Carder C."/>
            <person name="Chapman J.C."/>
            <person name="Clark S.Y."/>
            <person name="Clarke G."/>
            <person name="Clee C."/>
            <person name="Cobley V."/>
            <person name="Collier R.E."/>
            <person name="Corby N."/>
            <person name="Coville G.J."/>
            <person name="Davies J."/>
            <person name="Deadman R."/>
            <person name="Dunn M."/>
            <person name="Earthrowl M."/>
            <person name="Ellington A.G."/>
            <person name="Errington H."/>
            <person name="Frankish A."/>
            <person name="Frankland J."/>
            <person name="French L."/>
            <person name="Garner P."/>
            <person name="Garnett J."/>
            <person name="Gay L."/>
            <person name="Ghori M.R.J."/>
            <person name="Gibson R."/>
            <person name="Gilby L.M."/>
            <person name="Gillett W."/>
            <person name="Glithero R.J."/>
            <person name="Grafham D.V."/>
            <person name="Griffiths C."/>
            <person name="Griffiths-Jones S."/>
            <person name="Grocock R."/>
            <person name="Hammond S."/>
            <person name="Harrison E.S.I."/>
            <person name="Hart E."/>
            <person name="Haugen E."/>
            <person name="Heath P.D."/>
            <person name="Holmes S."/>
            <person name="Holt K."/>
            <person name="Howden P.J."/>
            <person name="Hunt A.R."/>
            <person name="Hunt S.E."/>
            <person name="Hunter G."/>
            <person name="Isherwood J."/>
            <person name="James R."/>
            <person name="Johnson C."/>
            <person name="Johnson D."/>
            <person name="Joy A."/>
            <person name="Kay M."/>
            <person name="Kershaw J.K."/>
            <person name="Kibukawa M."/>
            <person name="Kimberley A.M."/>
            <person name="King A."/>
            <person name="Knights A.J."/>
            <person name="Lad H."/>
            <person name="Laird G."/>
            <person name="Lawlor S."/>
            <person name="Leongamornlert D.A."/>
            <person name="Lloyd D.M."/>
            <person name="Loveland J."/>
            <person name="Lovell J."/>
            <person name="Lush M.J."/>
            <person name="Lyne R."/>
            <person name="Martin S."/>
            <person name="Mashreghi-Mohammadi M."/>
            <person name="Matthews L."/>
            <person name="Matthews N.S.W."/>
            <person name="McLaren S."/>
            <person name="Milne S."/>
            <person name="Mistry S."/>
            <person name="Moore M.J.F."/>
            <person name="Nickerson T."/>
            <person name="O'Dell C.N."/>
            <person name="Oliver K."/>
            <person name="Palmeiri A."/>
            <person name="Palmer S.A."/>
            <person name="Parker A."/>
            <person name="Patel D."/>
            <person name="Pearce A.V."/>
            <person name="Peck A.I."/>
            <person name="Pelan S."/>
            <person name="Phelps K."/>
            <person name="Phillimore B.J."/>
            <person name="Plumb R."/>
            <person name="Rajan J."/>
            <person name="Raymond C."/>
            <person name="Rouse G."/>
            <person name="Saenphimmachak C."/>
            <person name="Sehra H.K."/>
            <person name="Sheridan E."/>
            <person name="Shownkeen R."/>
            <person name="Sims S."/>
            <person name="Skuce C.D."/>
            <person name="Smith M."/>
            <person name="Steward C."/>
            <person name="Subramanian S."/>
            <person name="Sycamore N."/>
            <person name="Tracey A."/>
            <person name="Tromans A."/>
            <person name="Van Helmond Z."/>
            <person name="Wall M."/>
            <person name="Wallis J.M."/>
            <person name="White S."/>
            <person name="Whitehead S.L."/>
            <person name="Wilkinson J.E."/>
            <person name="Willey D.L."/>
            <person name="Williams H."/>
            <person name="Wilming L."/>
            <person name="Wray P.W."/>
            <person name="Wu Z."/>
            <person name="Coulson A."/>
            <person name="Vaudin M."/>
            <person name="Sulston J.E."/>
            <person name="Durbin R.M."/>
            <person name="Hubbard T."/>
            <person name="Wooster R."/>
            <person name="Dunham I."/>
            <person name="Carter N.P."/>
            <person name="McVean G."/>
            <person name="Ross M.T."/>
            <person name="Harrow J."/>
            <person name="Olson M.V."/>
            <person name="Beck S."/>
            <person name="Rogers J."/>
            <person name="Bentley D.R."/>
        </authorList>
    </citation>
    <scope>NUCLEOTIDE SEQUENCE [LARGE SCALE GENOMIC DNA]</scope>
</reference>
<reference key="4">
    <citation type="journal article" date="2004" name="Genome Res.">
        <title>The status, quality, and expansion of the NIH full-length cDNA project: the Mammalian Gene Collection (MGC).</title>
        <authorList>
            <consortium name="The MGC Project Team"/>
        </authorList>
    </citation>
    <scope>NUCLEOTIDE SEQUENCE [LARGE SCALE MRNA] (ISOFORM 2)</scope>
    <scope>VARIANTS ALA-408 AND GLN-552</scope>
    <source>
        <tissue>Skin</tissue>
    </source>
</reference>
<reference key="5">
    <citation type="journal article" date="1991" name="Biochem. J.">
        <title>Molecular cloning and expression of a new putative inositol 1,4,5-trisphosphate 3-kinase isoenzyme.</title>
        <authorList>
            <person name="Takazawa K."/>
            <person name="Perret J."/>
            <person name="Dumont J.E."/>
            <person name="Erneux C."/>
        </authorList>
    </citation>
    <scope>NUCLEOTIDE SEQUENCE [MRNA] OF 442-946 (ISOFORM 1)</scope>
    <scope>VARIANT GLN-552</scope>
    <scope>FUNCTION</scope>
    <scope>CATALYTIC ACTIVITY</scope>
    <scope>BIOPHYSICOCHEMICAL PROPERTIES</scope>
    <source>
        <tissue>Hippocampus</tissue>
    </source>
</reference>
<reference key="6">
    <citation type="journal article" date="2003" name="Biochem. J.">
        <title>The three isoenzymes of human inositol-1,4,5-trisphosphate 3-kinase show specific intracellular localization but comparable Ca2+ responses on transfection in COS-7 cells.</title>
        <authorList>
            <person name="Dewaste V."/>
            <person name="Moreau C."/>
            <person name="De Smedt F."/>
            <person name="Bex F."/>
            <person name="De Smedt H."/>
            <person name="Wuytack F."/>
            <person name="Missiaen L."/>
            <person name="Erneux C."/>
        </authorList>
    </citation>
    <scope>SUBCELLULAR LOCATION</scope>
    <scope>ACTIVITY REGULATION</scope>
    <scope>FUNCTION</scope>
    <scope>MUTAGENESIS OF ASP-897</scope>
</reference>
<reference key="7">
    <citation type="journal article" date="2008" name="J. Proteome Res.">
        <title>Phosphoproteome of resting human platelets.</title>
        <authorList>
            <person name="Zahedi R.P."/>
            <person name="Lewandrowski U."/>
            <person name="Wiesner J."/>
            <person name="Wortelkamp S."/>
            <person name="Moebius J."/>
            <person name="Schuetz C."/>
            <person name="Walter U."/>
            <person name="Gambaryan S."/>
            <person name="Sickmann A."/>
        </authorList>
    </citation>
    <scope>PHOSPHORYLATION [LARGE SCALE ANALYSIS] AT SER-43 AND SER-49</scope>
    <scope>IDENTIFICATION BY MASS SPECTROMETRY [LARGE SCALE ANALYSIS]</scope>
    <source>
        <tissue>Platelet</tissue>
    </source>
</reference>
<reference key="8">
    <citation type="journal article" date="2008" name="Proc. Natl. Acad. Sci. U.S.A.">
        <title>A quantitative atlas of mitotic phosphorylation.</title>
        <authorList>
            <person name="Dephoure N."/>
            <person name="Zhou C."/>
            <person name="Villen J."/>
            <person name="Beausoleil S.A."/>
            <person name="Bakalarski C.E."/>
            <person name="Elledge S.J."/>
            <person name="Gygi S.P."/>
        </authorList>
    </citation>
    <scope>PHOSPHORYLATION [LARGE SCALE ANALYSIS] AT SER-43; SER-49 AND SER-71</scope>
    <scope>IDENTIFICATION BY MASS SPECTROMETRY [LARGE SCALE ANALYSIS]</scope>
    <source>
        <tissue>Cervix carcinoma</tissue>
    </source>
</reference>
<reference key="9">
    <citation type="journal article" date="2009" name="Sci. Signal.">
        <title>Quantitative phosphoproteomic analysis of T cell receptor signaling reveals system-wide modulation of protein-protein interactions.</title>
        <authorList>
            <person name="Mayya V."/>
            <person name="Lundgren D.H."/>
            <person name="Hwang S.-I."/>
            <person name="Rezaul K."/>
            <person name="Wu L."/>
            <person name="Eng J.K."/>
            <person name="Rodionov V."/>
            <person name="Han D.K."/>
        </authorList>
    </citation>
    <scope>PHOSPHORYLATION [LARGE SCALE ANALYSIS] AT SER-71</scope>
    <scope>IDENTIFICATION BY MASS SPECTROMETRY [LARGE SCALE ANALYSIS]</scope>
    <source>
        <tissue>Leukemic T-cell</tissue>
    </source>
</reference>
<reference key="10">
    <citation type="journal article" date="2012" name="J. Biol. Chem.">
        <title>Headpiece domain of dematin regulates calcium mobilization and signaling in platelets.</title>
        <authorList>
            <person name="Wieschhaus A.J."/>
            <person name="Le Breton G.C."/>
            <person name="Chishti A.H."/>
        </authorList>
    </citation>
    <scope>INTERACTION WITH DMTN</scope>
</reference>
<reference key="11">
    <citation type="journal article" date="2014" name="J. Proteomics">
        <title>An enzyme assisted RP-RPLC approach for in-depth analysis of human liver phosphoproteome.</title>
        <authorList>
            <person name="Bian Y."/>
            <person name="Song C."/>
            <person name="Cheng K."/>
            <person name="Dong M."/>
            <person name="Wang F."/>
            <person name="Huang J."/>
            <person name="Sun D."/>
            <person name="Wang L."/>
            <person name="Ye M."/>
            <person name="Zou H."/>
        </authorList>
    </citation>
    <scope>IDENTIFICATION BY MASS SPECTROMETRY [LARGE SCALE ANALYSIS]</scope>
    <source>
        <tissue>Liver</tissue>
    </source>
</reference>
<comment type="function">
    <text evidence="4 5 7">Catalyzes the phosphorylation of 1D-myo-inositol 1,4,5-trisphosphate (InsP3) into 1D-myo-inositol 1,3,4,5-tetrakisphosphate and participates to the regulation of calcium homeostasis.</text>
</comment>
<comment type="catalytic activity">
    <reaction evidence="4 5 7">
        <text>1D-myo-inositol 1,4,5-trisphosphate + ATP = 1D-myo-inositol 1,3,4,5-tetrakisphosphate + ADP + H(+)</text>
        <dbReference type="Rhea" id="RHEA:11020"/>
        <dbReference type="ChEBI" id="CHEBI:15378"/>
        <dbReference type="ChEBI" id="CHEBI:30616"/>
        <dbReference type="ChEBI" id="CHEBI:57895"/>
        <dbReference type="ChEBI" id="CHEBI:203600"/>
        <dbReference type="ChEBI" id="CHEBI:456216"/>
        <dbReference type="EC" id="2.7.1.127"/>
    </reaction>
    <physiologicalReaction direction="left-to-right" evidence="4 5 7">
        <dbReference type="Rhea" id="RHEA:11021"/>
    </physiologicalReaction>
</comment>
<comment type="activity regulation">
    <text evidence="4 5">IP3K is activated by calcium and calmodulin. Form B is much more sensitive to calcium/calmodulin than form A.</text>
</comment>
<comment type="biophysicochemical properties">
    <kinetics>
        <KM evidence="7">1.6 uM for 1D-myo-inositol 1,4,5-trisphosphate</KM>
    </kinetics>
</comment>
<comment type="subunit">
    <text evidence="8">Interacts with DMTN.</text>
</comment>
<comment type="interaction">
    <interactant intactId="EBI-751388">
        <id>P27987</id>
    </interactant>
    <interactant intactId="EBI-739624">
        <id>Q8NHQ1</id>
        <label>CEP70</label>
    </interactant>
    <organismsDiffer>false</organismsDiffer>
    <experiments>3</experiments>
</comment>
<comment type="interaction">
    <interactant intactId="EBI-751388">
        <id>P27987</id>
    </interactant>
    <interactant intactId="EBI-751587">
        <id>Q9GZU7</id>
        <label>CTDSP1</label>
    </interactant>
    <organismsDiffer>false</organismsDiffer>
    <experiments>5</experiments>
</comment>
<comment type="interaction">
    <interactant intactId="EBI-751388">
        <id>P27987</id>
    </interactant>
    <interactant intactId="EBI-618309">
        <id>Q08379</id>
        <label>GOLGA2</label>
    </interactant>
    <organismsDiffer>false</organismsDiffer>
    <experiments>4</experiments>
</comment>
<comment type="interaction">
    <interactant intactId="EBI-751388">
        <id>P27987</id>
    </interactant>
    <interactant intactId="EBI-347427">
        <id>Q13099</id>
        <label>IFT88</label>
    </interactant>
    <organismsDiffer>false</organismsDiffer>
    <experiments>3</experiments>
</comment>
<comment type="interaction">
    <interactant intactId="EBI-751388">
        <id>P27987</id>
    </interactant>
    <interactant intactId="EBI-1047093">
        <id>O76011</id>
        <label>KRT34</label>
    </interactant>
    <organismsDiffer>false</organismsDiffer>
    <experiments>3</experiments>
</comment>
<comment type="interaction">
    <interactant intactId="EBI-751388">
        <id>P27987</id>
    </interactant>
    <interactant intactId="EBI-11959013">
        <id>Q08209-2</id>
        <label>PPP3CA</label>
    </interactant>
    <organismsDiffer>false</organismsDiffer>
    <experiments>3</experiments>
</comment>
<comment type="interaction">
    <interactant intactId="EBI-751388">
        <id>P27987</id>
    </interactant>
    <interactant intactId="EBI-4395514">
        <id>Q8N9R8</id>
        <label>SCAI</label>
    </interactant>
    <organismsDiffer>false</organismsDiffer>
    <experiments>3</experiments>
</comment>
<comment type="interaction">
    <interactant intactId="EBI-751388">
        <id>P27987</id>
    </interactant>
    <interactant intactId="EBI-2130429">
        <id>Q9BYV2</id>
        <label>TRIM54</label>
    </interactant>
    <organismsDiffer>false</organismsDiffer>
    <experiments>3</experiments>
</comment>
<comment type="interaction">
    <interactant intactId="EBI-751388">
        <id>P27987</id>
    </interactant>
    <interactant intactId="EBI-947187">
        <id>Q9UHD9</id>
        <label>UBQLN2</label>
    </interactant>
    <organismsDiffer>false</organismsDiffer>
    <experiments>5</experiments>
</comment>
<comment type="subcellular location">
    <subcellularLocation>
        <location evidence="5">Cytoplasm</location>
        <location evidence="5">Cytoskeleton</location>
    </subcellularLocation>
    <subcellularLocation>
        <location evidence="5">Cytoplasm</location>
    </subcellularLocation>
    <subcellularLocation>
        <location evidence="5">Endoplasmic reticulum</location>
    </subcellularLocation>
</comment>
<comment type="alternative products">
    <event type="alternative splicing"/>
    <isoform>
        <id>P27987-1</id>
        <name>1</name>
        <sequence type="displayed"/>
    </isoform>
    <isoform>
        <id>P27987-2</id>
        <name>2</name>
        <sequence type="described" ref="VSP_016092"/>
    </isoform>
</comment>
<comment type="similarity">
    <text evidence="11">Belongs to the inositol phosphokinase (IPK) family.</text>
</comment>
<comment type="sequence caution" evidence="11">
    <conflict type="erroneous initiation">
        <sequence resource="EMBL-CDS" id="CAA40491"/>
    </conflict>
    <text>Truncated N-terminus.</text>
</comment>
<evidence type="ECO:0000250" key="1"/>
<evidence type="ECO:0000250" key="2">
    <source>
        <dbReference type="UniProtKB" id="P42335"/>
    </source>
</evidence>
<evidence type="ECO:0000256" key="3">
    <source>
        <dbReference type="SAM" id="MobiDB-lite"/>
    </source>
</evidence>
<evidence type="ECO:0000269" key="4">
    <source>
    </source>
</evidence>
<evidence type="ECO:0000269" key="5">
    <source>
    </source>
</evidence>
<evidence type="ECO:0000269" key="6">
    <source>
    </source>
</evidence>
<evidence type="ECO:0000269" key="7">
    <source>
    </source>
</evidence>
<evidence type="ECO:0000269" key="8">
    <source>
    </source>
</evidence>
<evidence type="ECO:0000269" key="9">
    <source ref="2"/>
</evidence>
<evidence type="ECO:0000303" key="10">
    <source>
    </source>
</evidence>
<evidence type="ECO:0000305" key="11"/>
<evidence type="ECO:0000312" key="12">
    <source>
        <dbReference type="HGNC" id="HGNC:6179"/>
    </source>
</evidence>
<evidence type="ECO:0007744" key="13">
    <source>
    </source>
</evidence>
<evidence type="ECO:0007744" key="14">
    <source>
    </source>
</evidence>
<evidence type="ECO:0007744" key="15">
    <source>
    </source>
</evidence>
<accession>P27987</accession>
<accession>Q5VWL9</accession>
<accession>Q5VWM0</accession>
<accession>Q96BZ2</accession>
<accession>Q96JS1</accession>
<accession>Q9UH47</accession>
<gene>
    <name evidence="12" type="primary">ITPKB</name>
</gene>
<keyword id="KW-0025">Alternative splicing</keyword>
<keyword id="KW-0067">ATP-binding</keyword>
<keyword id="KW-0112">Calmodulin-binding</keyword>
<keyword id="KW-0963">Cytoplasm</keyword>
<keyword id="KW-0206">Cytoskeleton</keyword>
<keyword id="KW-0256">Endoplasmic reticulum</keyword>
<keyword id="KW-0418">Kinase</keyword>
<keyword id="KW-0547">Nucleotide-binding</keyword>
<keyword id="KW-0597">Phosphoprotein</keyword>
<keyword id="KW-1267">Proteomics identification</keyword>
<keyword id="KW-1185">Reference proteome</keyword>
<keyword id="KW-0808">Transferase</keyword>
<sequence>MAVYCYALNSLVIMNSANEMKSGGGPGPSGSETPPPPRRAVLSPGSVFSPGRGASFLFPPAESLSPEEPRSPGGWRSGRRRLNSSSGSGSGSSGSSVSSPSWAGRLRGDRQQVVAAGTLSPPGPEEAKRKLRILQRELQNVQVNQKVGMFEAHIQAQSSAIQAPRSPRLGRARSPSPCPFRSSSQPPGRVLVQGARSEERRTKSWGEQCPETSGTDSGRKGGPSLCSSQVKKGMPPLPGRAAPTGSEAQGPSAFVRMEKGIPASPRCGSPTAMEIDKRGSPTPGTRSCLAPSLGLFGASLTMATEVAARVTSTGPHRPQDLALTEPSGRARELEDLQPPEALVERQGQFLGSETSPAPERGGPRDGEPPGKMGKGYLPCGMPGSGEPEVGKRPEETTVSVQSAESSDSLSWSRLPRALASVGPEEARSGAPVGGGRWQLSDRVEGGSPTLGLLGGSPSAQPGTGNVEAGIPSGRMLEPLPCWDAAKDLKEPQCPPGDRVGVQPGNSRVWQGTMEKAGLAWTRGTGVQSEGTWESQRQDSDALPSPELLPQDPDKPFLRKACSPSNIPAVIITDMGTQEDGALEETQGSPRGNLPLRKLSSSSASSTGFSSSYEDSEEDISSDPERTLDPNSAFLHTLDQQKPRVSKSWRKIKNMVHWSPFVMSFKKKYPWIQLAGHAGSFKAAANGRILKKHCESEQRCLDRLMVDVLRPFVPAYHGDVVKDGERYNQMDDLLADFDSPCVMDCKMGIRTYLEEELTKARKKPSLRKDMYQKMIEVDPEAPTEEEKAQRAVTKPRYMQWRETISSTATLGFRIEGIKKEDGTVNRDFKKTKTREQVTEAFREFTKGNHNILIAYRDRLKAIRTTLEVSPFFKCHEVIGSSLLFIHDKKEQAKVWMIDFGKTTPLPEGQTLQHDVPWQEGNREDGYLSGLNNLVDILTEMSQDAPLA</sequence>
<dbReference type="EC" id="2.7.1.127" evidence="4 7"/>
<dbReference type="EMBL" id="Y18024">
    <property type="protein sequence ID" value="CAB65055.3"/>
    <property type="molecule type" value="mRNA"/>
</dbReference>
<dbReference type="EMBL" id="AJ242780">
    <property type="protein sequence ID" value="CAC40650.1"/>
    <property type="molecule type" value="mRNA"/>
</dbReference>
<dbReference type="EMBL" id="AL365444">
    <property type="status" value="NOT_ANNOTATED_CDS"/>
    <property type="molecule type" value="Genomic_DNA"/>
</dbReference>
<dbReference type="EMBL" id="BC015009">
    <property type="protein sequence ID" value="AAH15009.1"/>
    <property type="molecule type" value="mRNA"/>
</dbReference>
<dbReference type="EMBL" id="X57206">
    <property type="protein sequence ID" value="CAA40491.1"/>
    <property type="status" value="ALT_INIT"/>
    <property type="molecule type" value="mRNA"/>
</dbReference>
<dbReference type="CCDS" id="CCDS1555.1">
    <molecule id="P27987-1"/>
</dbReference>
<dbReference type="CCDS" id="CCDS91167.1">
    <molecule id="P27987-2"/>
</dbReference>
<dbReference type="PIR" id="JC7810">
    <property type="entry name" value="JC7810"/>
</dbReference>
<dbReference type="PIR" id="S17682">
    <property type="entry name" value="S17682"/>
</dbReference>
<dbReference type="RefSeq" id="NP_001375333.1">
    <molecule id="P27987-2"/>
    <property type="nucleotide sequence ID" value="NM_001388404.1"/>
</dbReference>
<dbReference type="RefSeq" id="NP_002212.3">
    <molecule id="P27987-1"/>
    <property type="nucleotide sequence ID" value="NM_002221.3"/>
</dbReference>
<dbReference type="RefSeq" id="XP_005273177.1">
    <property type="nucleotide sequence ID" value="XM_005273120.2"/>
</dbReference>
<dbReference type="SMR" id="P27987"/>
<dbReference type="BioGRID" id="109912">
    <property type="interactions" value="25"/>
</dbReference>
<dbReference type="FunCoup" id="P27987">
    <property type="interactions" value="1454"/>
</dbReference>
<dbReference type="IntAct" id="P27987">
    <property type="interactions" value="17"/>
</dbReference>
<dbReference type="MINT" id="P27987"/>
<dbReference type="STRING" id="9606.ENSP00000411152"/>
<dbReference type="ChEMBL" id="CHEMBL5165"/>
<dbReference type="GuidetoPHARMACOLOGY" id="1448"/>
<dbReference type="GlyGen" id="P27987">
    <property type="glycosylation" value="1 site"/>
</dbReference>
<dbReference type="iPTMnet" id="P27987"/>
<dbReference type="PhosphoSitePlus" id="P27987"/>
<dbReference type="SwissPalm" id="P27987"/>
<dbReference type="BioMuta" id="ITPKB"/>
<dbReference type="DMDM" id="62906885"/>
<dbReference type="jPOST" id="P27987"/>
<dbReference type="MassIVE" id="P27987"/>
<dbReference type="PaxDb" id="9606-ENSP00000411152"/>
<dbReference type="PeptideAtlas" id="P27987"/>
<dbReference type="ProteomicsDB" id="54433">
    <molecule id="P27987-1"/>
</dbReference>
<dbReference type="ProteomicsDB" id="54434">
    <molecule id="P27987-2"/>
</dbReference>
<dbReference type="Pumba" id="P27987"/>
<dbReference type="Antibodypedia" id="34652">
    <property type="antibodies" value="220 antibodies from 28 providers"/>
</dbReference>
<dbReference type="DNASU" id="3707"/>
<dbReference type="Ensembl" id="ENST00000272117.8">
    <molecule id="P27987-1"/>
    <property type="protein sequence ID" value="ENSP00000272117.3"/>
    <property type="gene ID" value="ENSG00000143772.11"/>
</dbReference>
<dbReference type="Ensembl" id="ENST00000366784.1">
    <molecule id="P27987-2"/>
    <property type="protein sequence ID" value="ENSP00000355748.1"/>
    <property type="gene ID" value="ENSG00000143772.11"/>
</dbReference>
<dbReference type="Ensembl" id="ENST00000429204.6">
    <molecule id="P27987-1"/>
    <property type="protein sequence ID" value="ENSP00000411152.1"/>
    <property type="gene ID" value="ENSG00000143772.11"/>
</dbReference>
<dbReference type="GeneID" id="3707"/>
<dbReference type="KEGG" id="hsa:3707"/>
<dbReference type="MANE-Select" id="ENST00000429204.6">
    <property type="protein sequence ID" value="ENSP00000411152.1"/>
    <property type="RefSeq nucleotide sequence ID" value="NM_002221.4"/>
    <property type="RefSeq protein sequence ID" value="NP_002212.3"/>
</dbReference>
<dbReference type="UCSC" id="uc001hqh.4">
    <molecule id="P27987-1"/>
    <property type="organism name" value="human"/>
</dbReference>
<dbReference type="AGR" id="HGNC:6179"/>
<dbReference type="CTD" id="3707"/>
<dbReference type="DisGeNET" id="3707"/>
<dbReference type="GeneCards" id="ITPKB"/>
<dbReference type="HGNC" id="HGNC:6179">
    <property type="gene designation" value="ITPKB"/>
</dbReference>
<dbReference type="HPA" id="ENSG00000143772">
    <property type="expression patterns" value="Tissue enhanced (brain, choroid plexus)"/>
</dbReference>
<dbReference type="MalaCards" id="ITPKB"/>
<dbReference type="MIM" id="147522">
    <property type="type" value="gene"/>
</dbReference>
<dbReference type="neXtProt" id="NX_P27987"/>
<dbReference type="OpenTargets" id="ENSG00000143772"/>
<dbReference type="PharmGKB" id="PA29976"/>
<dbReference type="VEuPathDB" id="HostDB:ENSG00000143772"/>
<dbReference type="eggNOG" id="KOG1621">
    <property type="taxonomic scope" value="Eukaryota"/>
</dbReference>
<dbReference type="GeneTree" id="ENSGT00940000156764"/>
<dbReference type="HOGENOM" id="CLU_017767_4_0_1"/>
<dbReference type="InParanoid" id="P27987"/>
<dbReference type="OMA" id="RTKSWGD"/>
<dbReference type="OrthoDB" id="338650at2759"/>
<dbReference type="PAN-GO" id="P27987">
    <property type="GO annotations" value="5 GO annotations based on evolutionary models"/>
</dbReference>
<dbReference type="PhylomeDB" id="P27987"/>
<dbReference type="TreeFam" id="TF318394"/>
<dbReference type="BioCyc" id="MetaCyc:HS07103-MONOMER"/>
<dbReference type="BRENDA" id="2.7.1.127">
    <property type="organism ID" value="2681"/>
</dbReference>
<dbReference type="PathwayCommons" id="P27987"/>
<dbReference type="Reactome" id="R-HSA-1855204">
    <property type="pathway name" value="Synthesis of IP3 and IP4 in the cytosol"/>
</dbReference>
<dbReference type="SignaLink" id="P27987"/>
<dbReference type="SIGNOR" id="P27987"/>
<dbReference type="BioGRID-ORCS" id="3707">
    <property type="hits" value="17 hits in 1157 CRISPR screens"/>
</dbReference>
<dbReference type="ChiTaRS" id="ITPKB">
    <property type="organism name" value="human"/>
</dbReference>
<dbReference type="GeneWiki" id="ITPKB"/>
<dbReference type="GenomeRNAi" id="3707"/>
<dbReference type="Pharos" id="P27987">
    <property type="development level" value="Tchem"/>
</dbReference>
<dbReference type="PRO" id="PR:P27987"/>
<dbReference type="Proteomes" id="UP000005640">
    <property type="component" value="Chromosome 1"/>
</dbReference>
<dbReference type="RNAct" id="P27987">
    <property type="molecule type" value="protein"/>
</dbReference>
<dbReference type="Bgee" id="ENSG00000143772">
    <property type="expression patterns" value="Expressed in lateral globus pallidus and 182 other cell types or tissues"/>
</dbReference>
<dbReference type="GO" id="GO:0005737">
    <property type="term" value="C:cytoplasm"/>
    <property type="evidence" value="ECO:0000314"/>
    <property type="project" value="UniProtKB"/>
</dbReference>
<dbReference type="GO" id="GO:0005856">
    <property type="term" value="C:cytoskeleton"/>
    <property type="evidence" value="ECO:0000314"/>
    <property type="project" value="UniProtKB"/>
</dbReference>
<dbReference type="GO" id="GO:0005829">
    <property type="term" value="C:cytosol"/>
    <property type="evidence" value="ECO:0000304"/>
    <property type="project" value="Reactome"/>
</dbReference>
<dbReference type="GO" id="GO:0005783">
    <property type="term" value="C:endoplasmic reticulum"/>
    <property type="evidence" value="ECO:0000314"/>
    <property type="project" value="UniProtKB"/>
</dbReference>
<dbReference type="GO" id="GO:0016020">
    <property type="term" value="C:membrane"/>
    <property type="evidence" value="ECO:0007669"/>
    <property type="project" value="Ensembl"/>
</dbReference>
<dbReference type="GO" id="GO:0005634">
    <property type="term" value="C:nucleus"/>
    <property type="evidence" value="ECO:0000318"/>
    <property type="project" value="GO_Central"/>
</dbReference>
<dbReference type="GO" id="GO:0005524">
    <property type="term" value="F:ATP binding"/>
    <property type="evidence" value="ECO:0007669"/>
    <property type="project" value="UniProtKB-KW"/>
</dbReference>
<dbReference type="GO" id="GO:0005516">
    <property type="term" value="F:calmodulin binding"/>
    <property type="evidence" value="ECO:0007669"/>
    <property type="project" value="UniProtKB-KW"/>
</dbReference>
<dbReference type="GO" id="GO:0000828">
    <property type="term" value="F:inositol hexakisphosphate kinase activity"/>
    <property type="evidence" value="ECO:0000318"/>
    <property type="project" value="GO_Central"/>
</dbReference>
<dbReference type="GO" id="GO:0008440">
    <property type="term" value="F:inositol-1,4,5-trisphosphate 3-kinase activity"/>
    <property type="evidence" value="ECO:0000314"/>
    <property type="project" value="UniProtKB"/>
</dbReference>
<dbReference type="GO" id="GO:0007166">
    <property type="term" value="P:cell surface receptor signaling pathway"/>
    <property type="evidence" value="ECO:0007669"/>
    <property type="project" value="Ensembl"/>
</dbReference>
<dbReference type="GO" id="GO:0071277">
    <property type="term" value="P:cellular response to calcium ion"/>
    <property type="evidence" value="ECO:0000314"/>
    <property type="project" value="UniProtKB"/>
</dbReference>
<dbReference type="GO" id="GO:0035726">
    <property type="term" value="P:common myeloid progenitor cell proliferation"/>
    <property type="evidence" value="ECO:0007669"/>
    <property type="project" value="Ensembl"/>
</dbReference>
<dbReference type="GO" id="GO:0032958">
    <property type="term" value="P:inositol phosphate biosynthetic process"/>
    <property type="evidence" value="ECO:0000318"/>
    <property type="project" value="GO_Central"/>
</dbReference>
<dbReference type="GO" id="GO:0032957">
    <property type="term" value="P:inositol trisphosphate metabolic process"/>
    <property type="evidence" value="ECO:0000314"/>
    <property type="project" value="UniProtKB"/>
</dbReference>
<dbReference type="GO" id="GO:0000165">
    <property type="term" value="P:MAPK cascade"/>
    <property type="evidence" value="ECO:0007669"/>
    <property type="project" value="Ensembl"/>
</dbReference>
<dbReference type="GO" id="GO:0002262">
    <property type="term" value="P:myeloid cell homeostasis"/>
    <property type="evidence" value="ECO:0007669"/>
    <property type="project" value="Ensembl"/>
</dbReference>
<dbReference type="GO" id="GO:0045638">
    <property type="term" value="P:negative regulation of myeloid cell differentiation"/>
    <property type="evidence" value="ECO:0007669"/>
    <property type="project" value="Ensembl"/>
</dbReference>
<dbReference type="GO" id="GO:0033030">
    <property type="term" value="P:negative regulation of neutrophil apoptotic process"/>
    <property type="evidence" value="ECO:0007669"/>
    <property type="project" value="Ensembl"/>
</dbReference>
<dbReference type="GO" id="GO:0046854">
    <property type="term" value="P:phosphatidylinositol phosphate biosynthetic process"/>
    <property type="evidence" value="ECO:0000314"/>
    <property type="project" value="UniProtKB"/>
</dbReference>
<dbReference type="GO" id="GO:0046638">
    <property type="term" value="P:positive regulation of alpha-beta T cell differentiation"/>
    <property type="evidence" value="ECO:0007669"/>
    <property type="project" value="Ensembl"/>
</dbReference>
<dbReference type="GO" id="GO:0046579">
    <property type="term" value="P:positive regulation of Ras protein signal transduction"/>
    <property type="evidence" value="ECO:0007669"/>
    <property type="project" value="Ensembl"/>
</dbReference>
<dbReference type="GO" id="GO:0045059">
    <property type="term" value="P:positive thymic T cell selection"/>
    <property type="evidence" value="ECO:0007669"/>
    <property type="project" value="Ensembl"/>
</dbReference>
<dbReference type="GO" id="GO:0007165">
    <property type="term" value="P:signal transduction"/>
    <property type="evidence" value="ECO:0000304"/>
    <property type="project" value="ProtInc"/>
</dbReference>
<dbReference type="FunFam" id="3.30.470.160:FF:000001">
    <property type="entry name" value="Kinase"/>
    <property type="match status" value="1"/>
</dbReference>
<dbReference type="Gene3D" id="3.30.470.160">
    <property type="entry name" value="Inositol polyphosphate kinase"/>
    <property type="match status" value="1"/>
</dbReference>
<dbReference type="InterPro" id="IPR005522">
    <property type="entry name" value="IPK"/>
</dbReference>
<dbReference type="InterPro" id="IPR038286">
    <property type="entry name" value="IPK_sf"/>
</dbReference>
<dbReference type="PANTHER" id="PTHR12400">
    <property type="entry name" value="INOSITOL POLYPHOSPHATE KINASE"/>
    <property type="match status" value="1"/>
</dbReference>
<dbReference type="PANTHER" id="PTHR12400:SF4">
    <property type="entry name" value="INOSITOL-TRISPHOSPHATE 3-KINASE B"/>
    <property type="match status" value="1"/>
</dbReference>
<dbReference type="Pfam" id="PF03770">
    <property type="entry name" value="IPK"/>
    <property type="match status" value="1"/>
</dbReference>
<dbReference type="SUPFAM" id="SSF56104">
    <property type="entry name" value="SAICAR synthase-like"/>
    <property type="match status" value="1"/>
</dbReference>
<name>IP3KB_HUMAN</name>
<protein>
    <recommendedName>
        <fullName evidence="11">Inositol-trisphosphate 3-kinase B</fullName>
        <ecNumber evidence="4 7">2.7.1.127</ecNumber>
    </recommendedName>
    <alternativeName>
        <fullName>Inositol 1,4,5-trisphosphate 3-kinase B</fullName>
        <shortName>IP3 3-kinase B</shortName>
        <shortName>IP3K B</shortName>
        <shortName>InsP 3-kinase B</shortName>
    </alternativeName>
</protein>
<feature type="chain" id="PRO_0000066868" description="Inositol-trisphosphate 3-kinase B">
    <location>
        <begin position="1"/>
        <end position="946"/>
    </location>
</feature>
<feature type="region of interest" description="Disordered" evidence="3">
    <location>
        <begin position="19"/>
        <end position="128"/>
    </location>
</feature>
<feature type="region of interest" description="Disordered" evidence="3">
    <location>
        <begin position="156"/>
        <end position="288"/>
    </location>
</feature>
<feature type="region of interest" description="Disordered" evidence="3">
    <location>
        <begin position="308"/>
        <end position="472"/>
    </location>
</feature>
<feature type="region of interest" description="Disordered" evidence="3">
    <location>
        <begin position="486"/>
        <end position="561"/>
    </location>
</feature>
<feature type="region of interest" description="Disordered" evidence="3">
    <location>
        <begin position="580"/>
        <end position="638"/>
    </location>
</feature>
<feature type="region of interest" description="Calmodulin-binding" evidence="1">
    <location>
        <begin position="768"/>
        <end position="776"/>
    </location>
</feature>
<feature type="compositionally biased region" description="Low complexity" evidence="3">
    <location>
        <begin position="83"/>
        <end position="105"/>
    </location>
</feature>
<feature type="compositionally biased region" description="Polar residues" evidence="3">
    <location>
        <begin position="396"/>
        <end position="411"/>
    </location>
</feature>
<feature type="compositionally biased region" description="Low complexity" evidence="3">
    <location>
        <begin position="445"/>
        <end position="458"/>
    </location>
</feature>
<feature type="compositionally biased region" description="Polar residues" evidence="3">
    <location>
        <begin position="524"/>
        <end position="534"/>
    </location>
</feature>
<feature type="compositionally biased region" description="Low complexity" evidence="3">
    <location>
        <begin position="599"/>
        <end position="612"/>
    </location>
</feature>
<feature type="binding site" evidence="1">
    <location>
        <position position="679"/>
    </location>
    <ligand>
        <name>ATP</name>
        <dbReference type="ChEBI" id="CHEBI:30616"/>
    </ligand>
</feature>
<feature type="binding site" evidence="1">
    <location>
        <position position="690"/>
    </location>
    <ligand>
        <name>ATP</name>
        <dbReference type="ChEBI" id="CHEBI:30616"/>
    </ligand>
</feature>
<feature type="binding site" evidence="1">
    <location>
        <begin position="730"/>
        <end position="732"/>
    </location>
    <ligand>
        <name>ATP</name>
        <dbReference type="ChEBI" id="CHEBI:30616"/>
    </ligand>
</feature>
<feature type="binding site" evidence="1">
    <location>
        <position position="743"/>
    </location>
    <ligand>
        <name>ATP</name>
        <dbReference type="ChEBI" id="CHEBI:30616"/>
    </ligand>
</feature>
<feature type="binding site" evidence="1">
    <location>
        <position position="745"/>
    </location>
    <ligand>
        <name>substrate</name>
    </ligand>
</feature>
<feature type="binding site" evidence="1">
    <location>
        <position position="766"/>
    </location>
    <ligand>
        <name>substrate</name>
    </ligand>
</feature>
<feature type="binding site" evidence="1">
    <location>
        <begin position="793"/>
        <end position="800"/>
    </location>
    <ligand>
        <name>substrate</name>
    </ligand>
</feature>
<feature type="binding site" evidence="1">
    <location>
        <position position="817"/>
    </location>
    <ligand>
        <name>ATP</name>
        <dbReference type="ChEBI" id="CHEBI:30616"/>
    </ligand>
</feature>
<feature type="binding site" evidence="1">
    <location>
        <position position="897"/>
    </location>
    <ligand>
        <name>ATP</name>
        <dbReference type="ChEBI" id="CHEBI:30616"/>
    </ligand>
</feature>
<feature type="binding site" evidence="1">
    <location>
        <position position="900"/>
    </location>
    <ligand>
        <name>substrate</name>
    </ligand>
</feature>
<feature type="modified residue" description="Phosphoserine" evidence="13 14">
    <location>
        <position position="43"/>
    </location>
</feature>
<feature type="modified residue" description="Phosphoserine" evidence="13 14">
    <location>
        <position position="49"/>
    </location>
</feature>
<feature type="modified residue" description="Phosphoserine" evidence="14 15">
    <location>
        <position position="71"/>
    </location>
</feature>
<feature type="modified residue" description="Phosphoserine" evidence="2">
    <location>
        <position position="204"/>
    </location>
</feature>
<feature type="modified residue" description="Phosphoserine" evidence="2">
    <location>
        <position position="269"/>
    </location>
</feature>
<feature type="splice variant" id="VSP_016092" description="In isoform 2." evidence="10">
    <location>
        <begin position="645"/>
        <end position="946"/>
    </location>
</feature>
<feature type="sequence variant" id="VAR_053444" description="In dbSNP:rs3754413.">
    <original>A</original>
    <variation>T</variation>
    <location>
        <position position="322"/>
    </location>
</feature>
<feature type="sequence variant" id="VAR_023768" description="In dbSNP:rs6667260." evidence="4 6">
    <original>S</original>
    <variation>A</variation>
    <location>
        <position position="408"/>
    </location>
</feature>
<feature type="sequence variant" id="VAR_022380" description="In dbSNP:rs708776." evidence="4 6 7 9">
    <original>P</original>
    <variation>Q</variation>
    <location>
        <position position="552"/>
    </location>
</feature>
<feature type="mutagenesis site" description="Loss of kinase activity." evidence="5">
    <original>D</original>
    <variation>N</variation>
    <location>
        <position position="897"/>
    </location>
</feature>
<feature type="sequence conflict" description="In Ref. 2; CAC40650 and 4; AAH15009." evidence="11" ref="2 4">
    <original>R</original>
    <variation>H</variation>
    <location>
        <position position="173"/>
    </location>
</feature>
<feature type="sequence conflict" description="In Ref. 2; CAC40650." evidence="11" ref="2">
    <original>P</original>
    <variation>S</variation>
    <location>
        <position position="210"/>
    </location>
</feature>
<feature type="sequence conflict" description="In Ref. 2; CAC40650." evidence="11" ref="2">
    <original>GASLT</original>
    <variation>APSFP</variation>
    <location>
        <begin position="297"/>
        <end position="301"/>
    </location>
</feature>
<feature type="sequence conflict" description="In Ref. 5." evidence="11" ref="5">
    <original>RV</original>
    <variation>IP</variation>
    <location>
        <begin position="442"/>
        <end position="443"/>
    </location>
</feature>
<proteinExistence type="evidence at protein level"/>
<organism>
    <name type="scientific">Homo sapiens</name>
    <name type="common">Human</name>
    <dbReference type="NCBI Taxonomy" id="9606"/>
    <lineage>
        <taxon>Eukaryota</taxon>
        <taxon>Metazoa</taxon>
        <taxon>Chordata</taxon>
        <taxon>Craniata</taxon>
        <taxon>Vertebrata</taxon>
        <taxon>Euteleostomi</taxon>
        <taxon>Mammalia</taxon>
        <taxon>Eutheria</taxon>
        <taxon>Euarchontoglires</taxon>
        <taxon>Primates</taxon>
        <taxon>Haplorrhini</taxon>
        <taxon>Catarrhini</taxon>
        <taxon>Hominidae</taxon>
        <taxon>Homo</taxon>
    </lineage>
</organism>